<comment type="catalytic activity">
    <reaction evidence="1">
        <text>CMP + ATP = CDP + ADP</text>
        <dbReference type="Rhea" id="RHEA:11600"/>
        <dbReference type="ChEBI" id="CHEBI:30616"/>
        <dbReference type="ChEBI" id="CHEBI:58069"/>
        <dbReference type="ChEBI" id="CHEBI:60377"/>
        <dbReference type="ChEBI" id="CHEBI:456216"/>
        <dbReference type="EC" id="2.7.4.25"/>
    </reaction>
</comment>
<comment type="catalytic activity">
    <reaction evidence="1">
        <text>dCMP + ATP = dCDP + ADP</text>
        <dbReference type="Rhea" id="RHEA:25094"/>
        <dbReference type="ChEBI" id="CHEBI:30616"/>
        <dbReference type="ChEBI" id="CHEBI:57566"/>
        <dbReference type="ChEBI" id="CHEBI:58593"/>
        <dbReference type="ChEBI" id="CHEBI:456216"/>
        <dbReference type="EC" id="2.7.4.25"/>
    </reaction>
</comment>
<comment type="subcellular location">
    <subcellularLocation>
        <location evidence="1">Cytoplasm</location>
    </subcellularLocation>
</comment>
<comment type="similarity">
    <text evidence="1">Belongs to the cytidylate kinase family. Type 1 subfamily.</text>
</comment>
<sequence length="229" mass="25649">MKKITIAIDGFSSCGKSTMAKDLAKEIGYIYIDSGAMYRAVTLYSIENGIFHGDTIDTDELKRRIGDIHISFRIDPETGRPNTYLNGVNVENKIRTMEVSSKVSPISALGFVREAMVAQQQEMGKAKGIVMDGRDIGTTVFPDAELKIFVTASAEIRAQRRYDELKAKGQETGFEEILENVKQRDHIDQTREVSPLKKADDALLLDNSHLTIAEQKEWLMAEYQKAIKA</sequence>
<organism>
    <name type="scientific">Bacteroides fragilis (strain ATCC 25285 / DSM 2151 / CCUG 4856 / JCM 11019 / LMG 10263 / NCTC 9343 / Onslow / VPI 2553 / EN-2)</name>
    <dbReference type="NCBI Taxonomy" id="272559"/>
    <lineage>
        <taxon>Bacteria</taxon>
        <taxon>Pseudomonadati</taxon>
        <taxon>Bacteroidota</taxon>
        <taxon>Bacteroidia</taxon>
        <taxon>Bacteroidales</taxon>
        <taxon>Bacteroidaceae</taxon>
        <taxon>Bacteroides</taxon>
    </lineage>
</organism>
<feature type="chain" id="PRO_1000048184" description="Cytidylate kinase">
    <location>
        <begin position="1"/>
        <end position="229"/>
    </location>
</feature>
<feature type="binding site" evidence="1">
    <location>
        <begin position="10"/>
        <end position="18"/>
    </location>
    <ligand>
        <name>ATP</name>
        <dbReference type="ChEBI" id="CHEBI:30616"/>
    </ligand>
</feature>
<proteinExistence type="inferred from homology"/>
<protein>
    <recommendedName>
        <fullName evidence="1">Cytidylate kinase</fullName>
        <shortName evidence="1">CK</shortName>
        <ecNumber evidence="1">2.7.4.25</ecNumber>
    </recommendedName>
    <alternativeName>
        <fullName evidence="1">Cytidine monophosphate kinase</fullName>
        <shortName evidence="1">CMP kinase</shortName>
    </alternativeName>
</protein>
<keyword id="KW-0067">ATP-binding</keyword>
<keyword id="KW-0963">Cytoplasm</keyword>
<keyword id="KW-0418">Kinase</keyword>
<keyword id="KW-0547">Nucleotide-binding</keyword>
<keyword id="KW-0808">Transferase</keyword>
<dbReference type="EC" id="2.7.4.25" evidence="1"/>
<dbReference type="EMBL" id="CR626927">
    <property type="protein sequence ID" value="CAH09223.1"/>
    <property type="molecule type" value="Genomic_DNA"/>
</dbReference>
<dbReference type="RefSeq" id="WP_008769932.1">
    <property type="nucleotide sequence ID" value="NZ_UFTH01000001.1"/>
</dbReference>
<dbReference type="SMR" id="Q5L9K4"/>
<dbReference type="PaxDb" id="272559-BF9343_3442"/>
<dbReference type="GeneID" id="60366894"/>
<dbReference type="KEGG" id="bfs:BF9343_3442"/>
<dbReference type="eggNOG" id="COG0283">
    <property type="taxonomic scope" value="Bacteria"/>
</dbReference>
<dbReference type="HOGENOM" id="CLU_079959_0_2_10"/>
<dbReference type="Proteomes" id="UP000006731">
    <property type="component" value="Chromosome"/>
</dbReference>
<dbReference type="GO" id="GO:0005829">
    <property type="term" value="C:cytosol"/>
    <property type="evidence" value="ECO:0007669"/>
    <property type="project" value="TreeGrafter"/>
</dbReference>
<dbReference type="GO" id="GO:0005524">
    <property type="term" value="F:ATP binding"/>
    <property type="evidence" value="ECO:0007669"/>
    <property type="project" value="UniProtKB-UniRule"/>
</dbReference>
<dbReference type="GO" id="GO:0036430">
    <property type="term" value="F:CMP kinase activity"/>
    <property type="evidence" value="ECO:0007669"/>
    <property type="project" value="RHEA"/>
</dbReference>
<dbReference type="GO" id="GO:0036431">
    <property type="term" value="F:dCMP kinase activity"/>
    <property type="evidence" value="ECO:0007669"/>
    <property type="project" value="RHEA"/>
</dbReference>
<dbReference type="GO" id="GO:0015949">
    <property type="term" value="P:nucleobase-containing small molecule interconversion"/>
    <property type="evidence" value="ECO:0007669"/>
    <property type="project" value="TreeGrafter"/>
</dbReference>
<dbReference type="GO" id="GO:0006220">
    <property type="term" value="P:pyrimidine nucleotide metabolic process"/>
    <property type="evidence" value="ECO:0007669"/>
    <property type="project" value="UniProtKB-UniRule"/>
</dbReference>
<dbReference type="CDD" id="cd02020">
    <property type="entry name" value="CMPK"/>
    <property type="match status" value="1"/>
</dbReference>
<dbReference type="Gene3D" id="3.40.50.300">
    <property type="entry name" value="P-loop containing nucleotide triphosphate hydrolases"/>
    <property type="match status" value="1"/>
</dbReference>
<dbReference type="HAMAP" id="MF_00238">
    <property type="entry name" value="Cytidyl_kinase_type1"/>
    <property type="match status" value="1"/>
</dbReference>
<dbReference type="InterPro" id="IPR003136">
    <property type="entry name" value="Cytidylate_kin"/>
</dbReference>
<dbReference type="InterPro" id="IPR011994">
    <property type="entry name" value="Cytidylate_kinase_dom"/>
</dbReference>
<dbReference type="InterPro" id="IPR027417">
    <property type="entry name" value="P-loop_NTPase"/>
</dbReference>
<dbReference type="NCBIfam" id="TIGR00017">
    <property type="entry name" value="cmk"/>
    <property type="match status" value="1"/>
</dbReference>
<dbReference type="PANTHER" id="PTHR21299:SF2">
    <property type="entry name" value="CYTIDYLATE KINASE"/>
    <property type="match status" value="1"/>
</dbReference>
<dbReference type="PANTHER" id="PTHR21299">
    <property type="entry name" value="CYTIDYLATE KINASE/PANTOATE-BETA-ALANINE LIGASE"/>
    <property type="match status" value="1"/>
</dbReference>
<dbReference type="Pfam" id="PF02224">
    <property type="entry name" value="Cytidylate_kin"/>
    <property type="match status" value="1"/>
</dbReference>
<dbReference type="SUPFAM" id="SSF52540">
    <property type="entry name" value="P-loop containing nucleoside triphosphate hydrolases"/>
    <property type="match status" value="1"/>
</dbReference>
<reference key="1">
    <citation type="journal article" date="2005" name="Science">
        <title>Extensive DNA inversions in the B. fragilis genome control variable gene expression.</title>
        <authorList>
            <person name="Cerdeno-Tarraga A.-M."/>
            <person name="Patrick S."/>
            <person name="Crossman L.C."/>
            <person name="Blakely G."/>
            <person name="Abratt V."/>
            <person name="Lennard N."/>
            <person name="Poxton I."/>
            <person name="Duerden B."/>
            <person name="Harris B."/>
            <person name="Quail M.A."/>
            <person name="Barron A."/>
            <person name="Clark L."/>
            <person name="Corton C."/>
            <person name="Doggett J."/>
            <person name="Holden M.T.G."/>
            <person name="Larke N."/>
            <person name="Line A."/>
            <person name="Lord A."/>
            <person name="Norbertczak H."/>
            <person name="Ormond D."/>
            <person name="Price C."/>
            <person name="Rabbinowitsch E."/>
            <person name="Woodward J."/>
            <person name="Barrell B.G."/>
            <person name="Parkhill J."/>
        </authorList>
    </citation>
    <scope>NUCLEOTIDE SEQUENCE [LARGE SCALE GENOMIC DNA]</scope>
    <source>
        <strain>ATCC 25285 / DSM 2151 / CCUG 4856 / JCM 11019 / LMG 10263 / NCTC 9343 / Onslow / VPI 2553 / EN-2</strain>
    </source>
</reference>
<gene>
    <name evidence="1" type="primary">cmk</name>
    <name type="ordered locus">BF3535</name>
</gene>
<accession>Q5L9K4</accession>
<name>KCY_BACFN</name>
<evidence type="ECO:0000255" key="1">
    <source>
        <dbReference type="HAMAP-Rule" id="MF_00238"/>
    </source>
</evidence>